<geneLocation type="chloroplast"/>
<evidence type="ECO:0000255" key="1">
    <source>
        <dbReference type="HAMAP-Rule" id="MF_00445"/>
    </source>
</evidence>
<gene>
    <name evidence="1" type="primary">ndhB1</name>
</gene>
<name>NU2C1_ATRBE</name>
<dbReference type="EC" id="7.1.1.-" evidence="1"/>
<dbReference type="EMBL" id="AJ316582">
    <property type="protein sequence ID" value="CAC88089.1"/>
    <property type="molecule type" value="Genomic_DNA"/>
</dbReference>
<dbReference type="SMR" id="P0CC34"/>
<dbReference type="GO" id="GO:0009535">
    <property type="term" value="C:chloroplast thylakoid membrane"/>
    <property type="evidence" value="ECO:0007669"/>
    <property type="project" value="UniProtKB-SubCell"/>
</dbReference>
<dbReference type="GO" id="GO:0008137">
    <property type="term" value="F:NADH dehydrogenase (ubiquinone) activity"/>
    <property type="evidence" value="ECO:0007669"/>
    <property type="project" value="InterPro"/>
</dbReference>
<dbReference type="GO" id="GO:0048038">
    <property type="term" value="F:quinone binding"/>
    <property type="evidence" value="ECO:0007669"/>
    <property type="project" value="UniProtKB-KW"/>
</dbReference>
<dbReference type="GO" id="GO:0042773">
    <property type="term" value="P:ATP synthesis coupled electron transport"/>
    <property type="evidence" value="ECO:0007669"/>
    <property type="project" value="InterPro"/>
</dbReference>
<dbReference type="GO" id="GO:0019684">
    <property type="term" value="P:photosynthesis, light reaction"/>
    <property type="evidence" value="ECO:0007669"/>
    <property type="project" value="UniProtKB-UniRule"/>
</dbReference>
<dbReference type="HAMAP" id="MF_00445">
    <property type="entry name" value="NDH1_NuoN_1"/>
    <property type="match status" value="1"/>
</dbReference>
<dbReference type="InterPro" id="IPR010096">
    <property type="entry name" value="NADH-Q_OxRdtase_suN/2"/>
</dbReference>
<dbReference type="InterPro" id="IPR001750">
    <property type="entry name" value="ND/Mrp_TM"/>
</dbReference>
<dbReference type="InterPro" id="IPR045693">
    <property type="entry name" value="Ndh2_N"/>
</dbReference>
<dbReference type="NCBIfam" id="TIGR01770">
    <property type="entry name" value="NDH_I_N"/>
    <property type="match status" value="1"/>
</dbReference>
<dbReference type="NCBIfam" id="NF002701">
    <property type="entry name" value="PRK02504.1"/>
    <property type="match status" value="1"/>
</dbReference>
<dbReference type="PANTHER" id="PTHR22773">
    <property type="entry name" value="NADH DEHYDROGENASE"/>
    <property type="match status" value="1"/>
</dbReference>
<dbReference type="Pfam" id="PF19530">
    <property type="entry name" value="Ndh2_N"/>
    <property type="match status" value="1"/>
</dbReference>
<dbReference type="Pfam" id="PF00361">
    <property type="entry name" value="Proton_antipo_M"/>
    <property type="match status" value="1"/>
</dbReference>
<dbReference type="PRINTS" id="PR01434">
    <property type="entry name" value="NADHDHGNASE5"/>
</dbReference>
<comment type="function">
    <text evidence="1">NDH shuttles electrons from NAD(P)H:plastoquinone, via FMN and iron-sulfur (Fe-S) centers, to quinones in the photosynthetic chain and possibly in a chloroplast respiratory chain. The immediate electron acceptor for the enzyme in this species is believed to be plastoquinone. Couples the redox reaction to proton translocation, and thus conserves the redox energy in a proton gradient.</text>
</comment>
<comment type="catalytic activity">
    <reaction evidence="1">
        <text>a plastoquinone + NADH + (n+1) H(+)(in) = a plastoquinol + NAD(+) + n H(+)(out)</text>
        <dbReference type="Rhea" id="RHEA:42608"/>
        <dbReference type="Rhea" id="RHEA-COMP:9561"/>
        <dbReference type="Rhea" id="RHEA-COMP:9562"/>
        <dbReference type="ChEBI" id="CHEBI:15378"/>
        <dbReference type="ChEBI" id="CHEBI:17757"/>
        <dbReference type="ChEBI" id="CHEBI:57540"/>
        <dbReference type="ChEBI" id="CHEBI:57945"/>
        <dbReference type="ChEBI" id="CHEBI:62192"/>
    </reaction>
</comment>
<comment type="catalytic activity">
    <reaction evidence="1">
        <text>a plastoquinone + NADPH + (n+1) H(+)(in) = a plastoquinol + NADP(+) + n H(+)(out)</text>
        <dbReference type="Rhea" id="RHEA:42612"/>
        <dbReference type="Rhea" id="RHEA-COMP:9561"/>
        <dbReference type="Rhea" id="RHEA-COMP:9562"/>
        <dbReference type="ChEBI" id="CHEBI:15378"/>
        <dbReference type="ChEBI" id="CHEBI:17757"/>
        <dbReference type="ChEBI" id="CHEBI:57783"/>
        <dbReference type="ChEBI" id="CHEBI:58349"/>
        <dbReference type="ChEBI" id="CHEBI:62192"/>
    </reaction>
</comment>
<comment type="subunit">
    <text evidence="1">NDH is composed of at least 16 different subunits, 5 of which are encoded in the nucleus.</text>
</comment>
<comment type="subcellular location">
    <subcellularLocation>
        <location evidence="1">Plastid</location>
        <location evidence="1">Chloroplast thylakoid membrane</location>
        <topology evidence="1">Multi-pass membrane protein</topology>
    </subcellularLocation>
</comment>
<comment type="similarity">
    <text evidence="1">Belongs to the complex I subunit 2 family.</text>
</comment>
<keyword id="KW-0150">Chloroplast</keyword>
<keyword id="KW-0472">Membrane</keyword>
<keyword id="KW-0520">NAD</keyword>
<keyword id="KW-0521">NADP</keyword>
<keyword id="KW-0934">Plastid</keyword>
<keyword id="KW-0618">Plastoquinone</keyword>
<keyword id="KW-0874">Quinone</keyword>
<keyword id="KW-0793">Thylakoid</keyword>
<keyword id="KW-1278">Translocase</keyword>
<keyword id="KW-0812">Transmembrane</keyword>
<keyword id="KW-1133">Transmembrane helix</keyword>
<keyword id="KW-0813">Transport</keyword>
<sequence>MIWHVQNENFILDSTRIFMKAFHLLLFDGSLIFPECILIFGLILLLMIDSTSDQKDIPWLYFISSTSLVMSITALLFRWREEPMISFSGNFQTNNFNEIFQFLILLCSTLCIPLSVEYIECTEMAITEFLLFVLTATLGGMFLCGANDLITIFVAPECFSLCSYLLSGYTKKDVRSNEATMKYLLMGGASSSILVHGFSWLYGSSGGEIELQEIVNGLINTQMYNSPGISIALIFITVGIGFKLSPAPSHQWTPDVYEGSPTPVVAFLSVTSKVAASASATRIFDIPFYFSSNEWHLLLEILAILSMILGNLIAITQTSMKRMLAYSSIGQIGYVIIGIIVGDSNDGYASMITYMLFYISMNLGTFACIVLFGLRTGTDNIRDYAGLYTKDPFLALSLALCLLSLGGLPPLAGFFGKLYLFWCGWQAGLYFLVLIGLLTSVVSIYYYLKIIKLLMTGRNQEITPHVRNYRRSPLRSNNSIELSMIVCVIASTIPGISMNPIIAIAQDSLF</sequence>
<accession>P0CC34</accession>
<accession>Q8RVD7</accession>
<proteinExistence type="inferred from homology"/>
<reference key="1">
    <citation type="journal article" date="2002" name="Mol. Biol. Evol.">
        <title>The plastid chromosome of Atropa belladonna and its comparison with that of Nicotiana tabacum: the role of RNA editing in generating divergence in the process of plant speciation.</title>
        <authorList>
            <person name="Schmitz-Linneweber C."/>
            <person name="Regel R."/>
            <person name="Du T.G."/>
            <person name="Hupfer H."/>
            <person name="Herrmann R.G."/>
            <person name="Maier R.M."/>
        </authorList>
    </citation>
    <scope>NUCLEOTIDE SEQUENCE [LARGE SCALE GENOMIC DNA]</scope>
    <source>
        <strain>cv. Ab5p(kan)</strain>
    </source>
</reference>
<protein>
    <recommendedName>
        <fullName evidence="1">NAD(P)H-quinone oxidoreductase subunit 2 A, chloroplastic</fullName>
        <ecNumber evidence="1">7.1.1.-</ecNumber>
    </recommendedName>
    <alternativeName>
        <fullName evidence="1">NAD(P)H dehydrogenase, subunit 2 A</fullName>
    </alternativeName>
    <alternativeName>
        <fullName evidence="1">NADH-plastoquinone oxidoreductase subunit 2 A</fullName>
    </alternativeName>
</protein>
<feature type="chain" id="PRO_0000275467" description="NAD(P)H-quinone oxidoreductase subunit 2 A, chloroplastic">
    <location>
        <begin position="1"/>
        <end position="510"/>
    </location>
</feature>
<feature type="transmembrane region" description="Helical" evidence="1">
    <location>
        <begin position="24"/>
        <end position="44"/>
    </location>
</feature>
<feature type="transmembrane region" description="Helical" evidence="1">
    <location>
        <begin position="57"/>
        <end position="77"/>
    </location>
</feature>
<feature type="transmembrane region" description="Helical" evidence="1">
    <location>
        <begin position="99"/>
        <end position="119"/>
    </location>
</feature>
<feature type="transmembrane region" description="Helical" evidence="1">
    <location>
        <begin position="124"/>
        <end position="144"/>
    </location>
</feature>
<feature type="transmembrane region" description="Helical" evidence="1">
    <location>
        <begin position="149"/>
        <end position="169"/>
    </location>
</feature>
<feature type="transmembrane region" description="Helical" evidence="1">
    <location>
        <begin position="183"/>
        <end position="203"/>
    </location>
</feature>
<feature type="transmembrane region" description="Helical" evidence="1">
    <location>
        <begin position="227"/>
        <end position="247"/>
    </location>
</feature>
<feature type="transmembrane region" description="Helical" evidence="1">
    <location>
        <begin position="295"/>
        <end position="315"/>
    </location>
</feature>
<feature type="transmembrane region" description="Helical" evidence="1">
    <location>
        <begin position="323"/>
        <end position="343"/>
    </location>
</feature>
<feature type="transmembrane region" description="Helical" evidence="1">
    <location>
        <begin position="354"/>
        <end position="374"/>
    </location>
</feature>
<feature type="transmembrane region" description="Helical" evidence="1">
    <location>
        <begin position="395"/>
        <end position="415"/>
    </location>
</feature>
<feature type="transmembrane region" description="Helical" evidence="1">
    <location>
        <begin position="418"/>
        <end position="438"/>
    </location>
</feature>
<feature type="transmembrane region" description="Helical" evidence="1">
    <location>
        <begin position="484"/>
        <end position="504"/>
    </location>
</feature>
<organism>
    <name type="scientific">Atropa belladonna</name>
    <name type="common">Belladonna</name>
    <name type="synonym">Deadly nightshade</name>
    <dbReference type="NCBI Taxonomy" id="33113"/>
    <lineage>
        <taxon>Eukaryota</taxon>
        <taxon>Viridiplantae</taxon>
        <taxon>Streptophyta</taxon>
        <taxon>Embryophyta</taxon>
        <taxon>Tracheophyta</taxon>
        <taxon>Spermatophyta</taxon>
        <taxon>Magnoliopsida</taxon>
        <taxon>eudicotyledons</taxon>
        <taxon>Gunneridae</taxon>
        <taxon>Pentapetalae</taxon>
        <taxon>asterids</taxon>
        <taxon>lamiids</taxon>
        <taxon>Solanales</taxon>
        <taxon>Solanaceae</taxon>
        <taxon>Solanoideae</taxon>
        <taxon>Hyoscyameae</taxon>
        <taxon>Atropa</taxon>
    </lineage>
</organism>